<protein>
    <recommendedName>
        <fullName>Molybdate/tungstate import ATP-binding protein WtpC</fullName>
        <ecNumber evidence="2">7.3.2.6</ecNumber>
    </recommendedName>
</protein>
<name>WTPC_PYRHO</name>
<feature type="chain" id="PRO_0000338504" description="Molybdate/tungstate import ATP-binding protein WtpC">
    <location>
        <begin position="1"/>
        <end position="345"/>
    </location>
</feature>
<feature type="domain" description="ABC transporter" evidence="3">
    <location>
        <begin position="2"/>
        <end position="231"/>
    </location>
</feature>
<feature type="domain" description="Mop" evidence="4">
    <location>
        <begin position="280"/>
        <end position="345"/>
    </location>
</feature>
<feature type="binding site" evidence="3">
    <location>
        <begin position="33"/>
        <end position="40"/>
    </location>
    <ligand>
        <name>ATP</name>
        <dbReference type="ChEBI" id="CHEBI:30616"/>
    </ligand>
</feature>
<evidence type="ECO:0000250" key="1"/>
<evidence type="ECO:0000250" key="2">
    <source>
        <dbReference type="UniProtKB" id="Q8U4K3"/>
    </source>
</evidence>
<evidence type="ECO:0000255" key="3">
    <source>
        <dbReference type="PROSITE-ProRule" id="PRU00434"/>
    </source>
</evidence>
<evidence type="ECO:0000255" key="4">
    <source>
        <dbReference type="PROSITE-ProRule" id="PRU01213"/>
    </source>
</evidence>
<evidence type="ECO:0000305" key="5"/>
<sequence>MLKVESISKDYREFKLREISFDVREGEHFIILGPSGSGKTVLLEIIAGIISPDRGRILLRGEDITGLPPEKRNFSYIPQNYALFPHMTVFDNIAFGLKLRKIPRKEVARKVREVAESLGIDHLLHRKPRTLSGGEQQRVAIARALVVKPELLLMDEPFANLDVQTKSKLIREMKRWRKEFGFTAIHVTHSFEEALSLGDRVGIMLRGRLVQVGDVRDVFSKPKSEEVARFLGFENIIEGVANGRILKVGDLRIELPREVWGKVRVGIRPEDITIFMEGVKTSARNVFKARVEGIEDLGALVKLTLNLGGIILRAFITRSSLIELGIREGEEVYASFKASAIHVFP</sequence>
<organism>
    <name type="scientific">Pyrococcus horikoshii (strain ATCC 700860 / DSM 12428 / JCM 9974 / NBRC 100139 / OT-3)</name>
    <dbReference type="NCBI Taxonomy" id="70601"/>
    <lineage>
        <taxon>Archaea</taxon>
        <taxon>Methanobacteriati</taxon>
        <taxon>Methanobacteriota</taxon>
        <taxon>Thermococci</taxon>
        <taxon>Thermococcales</taxon>
        <taxon>Thermococcaceae</taxon>
        <taxon>Pyrococcus</taxon>
    </lineage>
</organism>
<accession>O57896</accession>
<proteinExistence type="inferred from homology"/>
<comment type="function">
    <text evidence="2">Part of the ABC transporter complex WtpABC involved in molybdate/tungstate import. Responsible for energy coupling to the transport system.</text>
</comment>
<comment type="catalytic activity">
    <reaction evidence="2">
        <text>tungstate(in) + ATP + H2O = tungstate(out) + ADP + phosphate + H(+)</text>
        <dbReference type="Rhea" id="RHEA:35027"/>
        <dbReference type="ChEBI" id="CHEBI:15377"/>
        <dbReference type="ChEBI" id="CHEBI:15378"/>
        <dbReference type="ChEBI" id="CHEBI:30616"/>
        <dbReference type="ChEBI" id="CHEBI:43474"/>
        <dbReference type="ChEBI" id="CHEBI:46502"/>
        <dbReference type="ChEBI" id="CHEBI:456216"/>
        <dbReference type="EC" id="7.3.2.6"/>
    </reaction>
</comment>
<comment type="subunit">
    <text evidence="1">The complex is composed of two ATP-binding proteins (WtpC), two transmembrane proteins (WtpB) and a solute-binding protein (WtpA).</text>
</comment>
<comment type="subcellular location">
    <subcellularLocation>
        <location evidence="1">Cell membrane</location>
        <topology evidence="1">Peripheral membrane protein</topology>
    </subcellularLocation>
</comment>
<comment type="similarity">
    <text evidence="5">Belongs to the ABC transporter superfamily. Sulfate/tungstate importer (TC 3.A.1.6) family.</text>
</comment>
<keyword id="KW-0067">ATP-binding</keyword>
<keyword id="KW-1003">Cell membrane</keyword>
<keyword id="KW-0472">Membrane</keyword>
<keyword id="KW-0500">Molybdenum</keyword>
<keyword id="KW-0547">Nucleotide-binding</keyword>
<keyword id="KW-1278">Translocase</keyword>
<keyword id="KW-0813">Transport</keyword>
<dbReference type="EC" id="7.3.2.6" evidence="2"/>
<dbReference type="EMBL" id="BA000001">
    <property type="protein sequence ID" value="BAA29226.1"/>
    <property type="molecule type" value="Genomic_DNA"/>
</dbReference>
<dbReference type="PIR" id="C71237">
    <property type="entry name" value="C71237"/>
</dbReference>
<dbReference type="RefSeq" id="WP_010884268.1">
    <property type="nucleotide sequence ID" value="NC_000961.1"/>
</dbReference>
<dbReference type="SMR" id="O57896"/>
<dbReference type="STRING" id="70601.gene:9377067"/>
<dbReference type="EnsemblBacteria" id="BAA29226">
    <property type="protein sequence ID" value="BAA29226"/>
    <property type="gene ID" value="BAA29226"/>
</dbReference>
<dbReference type="GeneID" id="1444050"/>
<dbReference type="KEGG" id="pho:PH0157"/>
<dbReference type="eggNOG" id="arCOG00175">
    <property type="taxonomic scope" value="Archaea"/>
</dbReference>
<dbReference type="OrthoDB" id="18368at2157"/>
<dbReference type="Proteomes" id="UP000000752">
    <property type="component" value="Chromosome"/>
</dbReference>
<dbReference type="GO" id="GO:0005886">
    <property type="term" value="C:plasma membrane"/>
    <property type="evidence" value="ECO:0007669"/>
    <property type="project" value="UniProtKB-SubCell"/>
</dbReference>
<dbReference type="GO" id="GO:1901238">
    <property type="term" value="F:ABC-type tungstate transporter activity"/>
    <property type="evidence" value="ECO:0007669"/>
    <property type="project" value="UniProtKB-EC"/>
</dbReference>
<dbReference type="GO" id="GO:0005524">
    <property type="term" value="F:ATP binding"/>
    <property type="evidence" value="ECO:0007669"/>
    <property type="project" value="UniProtKB-KW"/>
</dbReference>
<dbReference type="GO" id="GO:0016887">
    <property type="term" value="F:ATP hydrolysis activity"/>
    <property type="evidence" value="ECO:0007669"/>
    <property type="project" value="InterPro"/>
</dbReference>
<dbReference type="GO" id="GO:0015689">
    <property type="term" value="P:molybdate ion transport"/>
    <property type="evidence" value="ECO:0007669"/>
    <property type="project" value="InterPro"/>
</dbReference>
<dbReference type="CDD" id="cd03299">
    <property type="entry name" value="ABC_ModC_like"/>
    <property type="match status" value="1"/>
</dbReference>
<dbReference type="FunFam" id="3.40.50.300:FF:000425">
    <property type="entry name" value="Probable ABC transporter, ATP-binding subunit"/>
    <property type="match status" value="1"/>
</dbReference>
<dbReference type="Gene3D" id="2.40.50.100">
    <property type="match status" value="1"/>
</dbReference>
<dbReference type="Gene3D" id="3.40.50.300">
    <property type="entry name" value="P-loop containing nucleotide triphosphate hydrolases"/>
    <property type="match status" value="1"/>
</dbReference>
<dbReference type="InterPro" id="IPR003593">
    <property type="entry name" value="AAA+_ATPase"/>
</dbReference>
<dbReference type="InterPro" id="IPR050093">
    <property type="entry name" value="ABC_SmlMolc_Importer"/>
</dbReference>
<dbReference type="InterPro" id="IPR003439">
    <property type="entry name" value="ABC_transporter-like_ATP-bd"/>
</dbReference>
<dbReference type="InterPro" id="IPR017871">
    <property type="entry name" value="ABC_transporter-like_CS"/>
</dbReference>
<dbReference type="InterPro" id="IPR008995">
    <property type="entry name" value="Mo/tungstate-bd_C_term_dom"/>
</dbReference>
<dbReference type="InterPro" id="IPR053428">
    <property type="entry name" value="Molybdate/tungstate_ABC-ATPase"/>
</dbReference>
<dbReference type="InterPro" id="IPR004606">
    <property type="entry name" value="Mop_domain"/>
</dbReference>
<dbReference type="InterPro" id="IPR027417">
    <property type="entry name" value="P-loop_NTPase"/>
</dbReference>
<dbReference type="InterPro" id="IPR005116">
    <property type="entry name" value="Transp-assoc_OB_typ1"/>
</dbReference>
<dbReference type="NCBIfam" id="TIGR00638">
    <property type="entry name" value="Mop"/>
    <property type="match status" value="1"/>
</dbReference>
<dbReference type="NCBIfam" id="NF040840">
    <property type="entry name" value="tungstate_WtpC"/>
    <property type="match status" value="1"/>
</dbReference>
<dbReference type="PANTHER" id="PTHR42781">
    <property type="entry name" value="SPERMIDINE/PUTRESCINE IMPORT ATP-BINDING PROTEIN POTA"/>
    <property type="match status" value="1"/>
</dbReference>
<dbReference type="PANTHER" id="PTHR42781:SF4">
    <property type="entry name" value="SPERMIDINE_PUTRESCINE IMPORT ATP-BINDING PROTEIN POTA"/>
    <property type="match status" value="1"/>
</dbReference>
<dbReference type="Pfam" id="PF00005">
    <property type="entry name" value="ABC_tran"/>
    <property type="match status" value="1"/>
</dbReference>
<dbReference type="Pfam" id="PF03459">
    <property type="entry name" value="TOBE"/>
    <property type="match status" value="1"/>
</dbReference>
<dbReference type="SMART" id="SM00382">
    <property type="entry name" value="AAA"/>
    <property type="match status" value="1"/>
</dbReference>
<dbReference type="SUPFAM" id="SSF50331">
    <property type="entry name" value="MOP-like"/>
    <property type="match status" value="1"/>
</dbReference>
<dbReference type="SUPFAM" id="SSF52540">
    <property type="entry name" value="P-loop containing nucleoside triphosphate hydrolases"/>
    <property type="match status" value="1"/>
</dbReference>
<dbReference type="PROSITE" id="PS00211">
    <property type="entry name" value="ABC_TRANSPORTER_1"/>
    <property type="match status" value="1"/>
</dbReference>
<dbReference type="PROSITE" id="PS50893">
    <property type="entry name" value="ABC_TRANSPORTER_2"/>
    <property type="match status" value="1"/>
</dbReference>
<dbReference type="PROSITE" id="PS51866">
    <property type="entry name" value="MOP"/>
    <property type="match status" value="1"/>
</dbReference>
<reference key="1">
    <citation type="journal article" date="1998" name="DNA Res.">
        <title>Complete sequence and gene organization of the genome of a hyper-thermophilic archaebacterium, Pyrococcus horikoshii OT3.</title>
        <authorList>
            <person name="Kawarabayasi Y."/>
            <person name="Sawada M."/>
            <person name="Horikawa H."/>
            <person name="Haikawa Y."/>
            <person name="Hino Y."/>
            <person name="Yamamoto S."/>
            <person name="Sekine M."/>
            <person name="Baba S."/>
            <person name="Kosugi H."/>
            <person name="Hosoyama A."/>
            <person name="Nagai Y."/>
            <person name="Sakai M."/>
            <person name="Ogura K."/>
            <person name="Otsuka R."/>
            <person name="Nakazawa H."/>
            <person name="Takamiya M."/>
            <person name="Ohfuku Y."/>
            <person name="Funahashi T."/>
            <person name="Tanaka T."/>
            <person name="Kudoh Y."/>
            <person name="Yamazaki J."/>
            <person name="Kushida N."/>
            <person name="Oguchi A."/>
            <person name="Aoki K."/>
            <person name="Yoshizawa T."/>
            <person name="Nakamura Y."/>
            <person name="Robb F.T."/>
            <person name="Horikoshi K."/>
            <person name="Masuchi Y."/>
            <person name="Shizuya H."/>
            <person name="Kikuchi H."/>
        </authorList>
    </citation>
    <scope>NUCLEOTIDE SEQUENCE [LARGE SCALE GENOMIC DNA]</scope>
    <source>
        <strain>ATCC 700860 / DSM 12428 / JCM 9974 / NBRC 100139 / OT-3</strain>
    </source>
</reference>
<gene>
    <name type="primary">wtpC</name>
    <name type="ordered locus">PH0157</name>
</gene>